<gene>
    <name type="primary">ptr1</name>
    <name type="ordered locus">MJ0151</name>
</gene>
<dbReference type="EMBL" id="L77117">
    <property type="protein sequence ID" value="AAB98133.1"/>
    <property type="molecule type" value="Genomic_DNA"/>
</dbReference>
<dbReference type="PIR" id="H64318">
    <property type="entry name" value="H64318"/>
</dbReference>
<dbReference type="RefSeq" id="WP_010869646.1">
    <property type="nucleotide sequence ID" value="NC_000909.1"/>
</dbReference>
<dbReference type="SMR" id="Q57615"/>
<dbReference type="FunCoup" id="Q57615">
    <property type="interactions" value="3"/>
</dbReference>
<dbReference type="STRING" id="243232.MJ_0151"/>
<dbReference type="PaxDb" id="243232-MJ_0151"/>
<dbReference type="EnsemblBacteria" id="AAB98133">
    <property type="protein sequence ID" value="AAB98133"/>
    <property type="gene ID" value="MJ_0151"/>
</dbReference>
<dbReference type="GeneID" id="1450995"/>
<dbReference type="KEGG" id="mja:MJ_0151"/>
<dbReference type="eggNOG" id="arCOG01580">
    <property type="taxonomic scope" value="Archaea"/>
</dbReference>
<dbReference type="HOGENOM" id="CLU_091233_5_2_2"/>
<dbReference type="InParanoid" id="Q57615"/>
<dbReference type="OrthoDB" id="6762at2157"/>
<dbReference type="PhylomeDB" id="Q57615"/>
<dbReference type="Proteomes" id="UP000000805">
    <property type="component" value="Chromosome"/>
</dbReference>
<dbReference type="GO" id="GO:0043565">
    <property type="term" value="F:sequence-specific DNA binding"/>
    <property type="evidence" value="ECO:0007669"/>
    <property type="project" value="InterPro"/>
</dbReference>
<dbReference type="CDD" id="cd00090">
    <property type="entry name" value="HTH_ARSR"/>
    <property type="match status" value="1"/>
</dbReference>
<dbReference type="Gene3D" id="3.30.70.920">
    <property type="match status" value="1"/>
</dbReference>
<dbReference type="Gene3D" id="1.10.10.10">
    <property type="entry name" value="Winged helix-like DNA-binding domain superfamily/Winged helix DNA-binding domain"/>
    <property type="match status" value="1"/>
</dbReference>
<dbReference type="InterPro" id="IPR011991">
    <property type="entry name" value="ArsR-like_HTH"/>
</dbReference>
<dbReference type="InterPro" id="IPR000485">
    <property type="entry name" value="AsnC-type_HTH_dom"/>
</dbReference>
<dbReference type="InterPro" id="IPR011008">
    <property type="entry name" value="Dimeric_a/b-barrel"/>
</dbReference>
<dbReference type="InterPro" id="IPR019888">
    <property type="entry name" value="Tscrpt_reg_AsnC-like"/>
</dbReference>
<dbReference type="InterPro" id="IPR019887">
    <property type="entry name" value="Tscrpt_reg_AsnC/Lrp_C"/>
</dbReference>
<dbReference type="InterPro" id="IPR019885">
    <property type="entry name" value="Tscrpt_reg_HTH_AsnC-type_CS"/>
</dbReference>
<dbReference type="InterPro" id="IPR036388">
    <property type="entry name" value="WH-like_DNA-bd_sf"/>
</dbReference>
<dbReference type="InterPro" id="IPR036390">
    <property type="entry name" value="WH_DNA-bd_sf"/>
</dbReference>
<dbReference type="PANTHER" id="PTHR30154">
    <property type="entry name" value="LEUCINE-RESPONSIVE REGULATORY PROTEIN"/>
    <property type="match status" value="1"/>
</dbReference>
<dbReference type="PANTHER" id="PTHR30154:SF34">
    <property type="entry name" value="TRANSCRIPTIONAL REGULATOR AZLB"/>
    <property type="match status" value="1"/>
</dbReference>
<dbReference type="Pfam" id="PF01037">
    <property type="entry name" value="AsnC_trans_reg"/>
    <property type="match status" value="1"/>
</dbReference>
<dbReference type="Pfam" id="PF13412">
    <property type="entry name" value="HTH_24"/>
    <property type="match status" value="1"/>
</dbReference>
<dbReference type="PRINTS" id="PR00033">
    <property type="entry name" value="HTHASNC"/>
</dbReference>
<dbReference type="SMART" id="SM00344">
    <property type="entry name" value="HTH_ASNC"/>
    <property type="match status" value="1"/>
</dbReference>
<dbReference type="SUPFAM" id="SSF54909">
    <property type="entry name" value="Dimeric alpha+beta barrel"/>
    <property type="match status" value="1"/>
</dbReference>
<dbReference type="SUPFAM" id="SSF46785">
    <property type="entry name" value="Winged helix' DNA-binding domain"/>
    <property type="match status" value="1"/>
</dbReference>
<dbReference type="PROSITE" id="PS00519">
    <property type="entry name" value="HTH_ASNC_1"/>
    <property type="match status" value="1"/>
</dbReference>
<dbReference type="PROSITE" id="PS50956">
    <property type="entry name" value="HTH_ASNC_2"/>
    <property type="match status" value="1"/>
</dbReference>
<feature type="chain" id="PRO_0000111752" description="HTH-type transcriptional regulator Ptr1">
    <location>
        <begin position="1"/>
        <end position="148"/>
    </location>
</feature>
<feature type="domain" description="HTH asnC-type" evidence="1">
    <location>
        <begin position="2"/>
        <end position="63"/>
    </location>
</feature>
<feature type="DNA-binding region" description="H-T-H motif" evidence="1">
    <location>
        <begin position="21"/>
        <end position="40"/>
    </location>
</feature>
<organism>
    <name type="scientific">Methanocaldococcus jannaschii (strain ATCC 43067 / DSM 2661 / JAL-1 / JCM 10045 / NBRC 100440)</name>
    <name type="common">Methanococcus jannaschii</name>
    <dbReference type="NCBI Taxonomy" id="243232"/>
    <lineage>
        <taxon>Archaea</taxon>
        <taxon>Methanobacteriati</taxon>
        <taxon>Methanobacteriota</taxon>
        <taxon>Methanomada group</taxon>
        <taxon>Methanococci</taxon>
        <taxon>Methanococcales</taxon>
        <taxon>Methanocaldococcaceae</taxon>
        <taxon>Methanocaldococcus</taxon>
    </lineage>
</organism>
<evidence type="ECO:0000255" key="1">
    <source>
        <dbReference type="PROSITE-ProRule" id="PRU00319"/>
    </source>
</evidence>
<comment type="function">
    <text>Participates in positive as well as negative regulation of transcription. Binds to its own promoter.</text>
</comment>
<comment type="subunit">
    <text>Homodimer.</text>
</comment>
<proteinExistence type="evidence at protein level"/>
<protein>
    <recommendedName>
        <fullName>HTH-type transcriptional regulator Ptr1</fullName>
    </recommendedName>
</protein>
<reference key="1">
    <citation type="journal article" date="1996" name="Science">
        <title>Complete genome sequence of the methanogenic archaeon, Methanococcus jannaschii.</title>
        <authorList>
            <person name="Bult C.J."/>
            <person name="White O."/>
            <person name="Olsen G.J."/>
            <person name="Zhou L."/>
            <person name="Fleischmann R.D."/>
            <person name="Sutton G.G."/>
            <person name="Blake J.A."/>
            <person name="FitzGerald L.M."/>
            <person name="Clayton R.A."/>
            <person name="Gocayne J.D."/>
            <person name="Kerlavage A.R."/>
            <person name="Dougherty B.A."/>
            <person name="Tomb J.-F."/>
            <person name="Adams M.D."/>
            <person name="Reich C.I."/>
            <person name="Overbeek R."/>
            <person name="Kirkness E.F."/>
            <person name="Weinstock K.G."/>
            <person name="Merrick J.M."/>
            <person name="Glodek A."/>
            <person name="Scott J.L."/>
            <person name="Geoghagen N.S.M."/>
            <person name="Weidman J.F."/>
            <person name="Fuhrmann J.L."/>
            <person name="Nguyen D."/>
            <person name="Utterback T.R."/>
            <person name="Kelley J.M."/>
            <person name="Peterson J.D."/>
            <person name="Sadow P.W."/>
            <person name="Hanna M.C."/>
            <person name="Cotton M.D."/>
            <person name="Roberts K.M."/>
            <person name="Hurst M.A."/>
            <person name="Kaine B.P."/>
            <person name="Borodovsky M."/>
            <person name="Klenk H.-P."/>
            <person name="Fraser C.M."/>
            <person name="Smith H.O."/>
            <person name="Woese C.R."/>
            <person name="Venter J.C."/>
        </authorList>
    </citation>
    <scope>NUCLEOTIDE SEQUENCE [LARGE SCALE GENOMIC DNA]</scope>
    <source>
        <strain>ATCC 43067 / DSM 2661 / JAL-1 / JCM 10045 / NBRC 100440</strain>
    </source>
</reference>
<reference key="2">
    <citation type="journal article" date="2001" name="EMBO J.">
        <title>A thermostable platform for transcriptional regulation: the DNA-binding properties of two Lrp homologs from the hyperthermophilic archaeon Methanococcus jannaschii.</title>
        <authorList>
            <person name="Ouhammouch M."/>
            <person name="Geiduschek E.P."/>
        </authorList>
    </citation>
    <scope>CHARACTERIZATION</scope>
</reference>
<keyword id="KW-0010">Activator</keyword>
<keyword id="KW-0238">DNA-binding</keyword>
<keyword id="KW-1185">Reference proteome</keyword>
<keyword id="KW-0678">Repressor</keyword>
<keyword id="KW-0804">Transcription</keyword>
<keyword id="KW-0805">Transcription regulation</keyword>
<accession>Q57615</accession>
<name>PTR1_METJA</name>
<sequence>MLDRIDLKILRILNGNARKSFREIGRELGISEGTVRNRVKRLTEKGIITGFHASINPKNLGFEVVAILGLYIKPSKVEETLNKLKELDEIVELYQTTGEYDAVCIAILKDIESLGKFLAEKIYPLVNVNGCKVTLVLRTFKDGSKMPI</sequence>